<reference key="1">
    <citation type="journal article" date="2000" name="Nature">
        <title>Sequence and analysis of chromosome 1 of the plant Arabidopsis thaliana.</title>
        <authorList>
            <person name="Theologis A."/>
            <person name="Ecker J.R."/>
            <person name="Palm C.J."/>
            <person name="Federspiel N.A."/>
            <person name="Kaul S."/>
            <person name="White O."/>
            <person name="Alonso J."/>
            <person name="Altafi H."/>
            <person name="Araujo R."/>
            <person name="Bowman C.L."/>
            <person name="Brooks S.Y."/>
            <person name="Buehler E."/>
            <person name="Chan A."/>
            <person name="Chao Q."/>
            <person name="Chen H."/>
            <person name="Cheuk R.F."/>
            <person name="Chin C.W."/>
            <person name="Chung M.K."/>
            <person name="Conn L."/>
            <person name="Conway A.B."/>
            <person name="Conway A.R."/>
            <person name="Creasy T.H."/>
            <person name="Dewar K."/>
            <person name="Dunn P."/>
            <person name="Etgu P."/>
            <person name="Feldblyum T.V."/>
            <person name="Feng J.-D."/>
            <person name="Fong B."/>
            <person name="Fujii C.Y."/>
            <person name="Gill J.E."/>
            <person name="Goldsmith A.D."/>
            <person name="Haas B."/>
            <person name="Hansen N.F."/>
            <person name="Hughes B."/>
            <person name="Huizar L."/>
            <person name="Hunter J.L."/>
            <person name="Jenkins J."/>
            <person name="Johnson-Hopson C."/>
            <person name="Khan S."/>
            <person name="Khaykin E."/>
            <person name="Kim C.J."/>
            <person name="Koo H.L."/>
            <person name="Kremenetskaia I."/>
            <person name="Kurtz D.B."/>
            <person name="Kwan A."/>
            <person name="Lam B."/>
            <person name="Langin-Hooper S."/>
            <person name="Lee A."/>
            <person name="Lee J.M."/>
            <person name="Lenz C.A."/>
            <person name="Li J.H."/>
            <person name="Li Y.-P."/>
            <person name="Lin X."/>
            <person name="Liu S.X."/>
            <person name="Liu Z.A."/>
            <person name="Luros J.S."/>
            <person name="Maiti R."/>
            <person name="Marziali A."/>
            <person name="Militscher J."/>
            <person name="Miranda M."/>
            <person name="Nguyen M."/>
            <person name="Nierman W.C."/>
            <person name="Osborne B.I."/>
            <person name="Pai G."/>
            <person name="Peterson J."/>
            <person name="Pham P.K."/>
            <person name="Rizzo M."/>
            <person name="Rooney T."/>
            <person name="Rowley D."/>
            <person name="Sakano H."/>
            <person name="Salzberg S.L."/>
            <person name="Schwartz J.R."/>
            <person name="Shinn P."/>
            <person name="Southwick A.M."/>
            <person name="Sun H."/>
            <person name="Tallon L.J."/>
            <person name="Tambunga G."/>
            <person name="Toriumi M.J."/>
            <person name="Town C.D."/>
            <person name="Utterback T."/>
            <person name="Van Aken S."/>
            <person name="Vaysberg M."/>
            <person name="Vysotskaia V.S."/>
            <person name="Walker M."/>
            <person name="Wu D."/>
            <person name="Yu G."/>
            <person name="Fraser C.M."/>
            <person name="Venter J.C."/>
            <person name="Davis R.W."/>
        </authorList>
    </citation>
    <scope>NUCLEOTIDE SEQUENCE [LARGE SCALE GENOMIC DNA]</scope>
    <source>
        <strain>cv. Columbia</strain>
    </source>
</reference>
<reference key="2">
    <citation type="journal article" date="2017" name="Plant J.">
        <title>Araport11: a complete reannotation of the Arabidopsis thaliana reference genome.</title>
        <authorList>
            <person name="Cheng C.Y."/>
            <person name="Krishnakumar V."/>
            <person name="Chan A.P."/>
            <person name="Thibaud-Nissen F."/>
            <person name="Schobel S."/>
            <person name="Town C.D."/>
        </authorList>
    </citation>
    <scope>GENOME REANNOTATION</scope>
    <source>
        <strain>cv. Columbia</strain>
    </source>
</reference>
<reference key="3">
    <citation type="submission" date="2004-09" db="EMBL/GenBank/DDBJ databases">
        <authorList>
            <consortium name="Center for eukaryotic structural genomics (CESG)"/>
        </authorList>
    </citation>
    <scope>NUCLEOTIDE SEQUENCE [LARGE SCALE MRNA] OF 40-349</scope>
</reference>
<reference key="4">
    <citation type="journal article" date="2004" name="Prog. Lipid Res.">
        <title>GDSL family of serine esterases/lipases.</title>
        <authorList>
            <person name="Akoh C.C."/>
            <person name="Lee G.-C."/>
            <person name="Liaw Y.-C."/>
            <person name="Huang T.-H."/>
            <person name="Shaw J.-F."/>
        </authorList>
    </citation>
    <scope>REVIEW</scope>
</reference>
<reference key="5">
    <citation type="journal article" date="2008" name="Pak. J. Biol. Sci.">
        <title>Sequence analysis of GDSL lipase gene family in Arabidopsis thaliana.</title>
        <authorList>
            <person name="Ling H."/>
        </authorList>
    </citation>
    <scope>GENE FAMILY</scope>
</reference>
<accession>Q3ECM4</accession>
<name>GDL25_ARATH</name>
<comment type="subcellular location">
    <subcellularLocation>
        <location evidence="3">Secreted</location>
    </subcellularLocation>
</comment>
<comment type="similarity">
    <text evidence="3">Belongs to the 'GDSL' lipolytic enzyme family.</text>
</comment>
<feature type="signal peptide" evidence="2">
    <location>
        <begin position="1"/>
        <end position="19"/>
    </location>
</feature>
<feature type="chain" id="PRO_0000367367" description="GDSL esterase/lipase At1g58725">
    <location>
        <begin position="20"/>
        <end position="349"/>
    </location>
</feature>
<feature type="active site" description="Nucleophile" evidence="1">
    <location>
        <position position="37"/>
    </location>
</feature>
<feature type="active site" evidence="1">
    <location>
        <position position="324"/>
    </location>
</feature>
<feature type="active site" evidence="1">
    <location>
        <position position="327"/>
    </location>
</feature>
<feature type="glycosylation site" description="N-linked (GlcNAc...) asparagine" evidence="2">
    <location>
        <position position="25"/>
    </location>
</feature>
<feature type="glycosylation site" description="N-linked (GlcNAc...) asparagine" evidence="2">
    <location>
        <position position="316"/>
    </location>
</feature>
<keyword id="KW-0325">Glycoprotein</keyword>
<keyword id="KW-0378">Hydrolase</keyword>
<keyword id="KW-0442">Lipid degradation</keyword>
<keyword id="KW-0443">Lipid metabolism</keyword>
<keyword id="KW-1185">Reference proteome</keyword>
<keyword id="KW-0964">Secreted</keyword>
<keyword id="KW-0732">Signal</keyword>
<sequence length="349" mass="38858">MKIQILLFALVLIFVEANAATQGKNTTIPALIVFGDSIMDTGNNNNLPTLLKCNFPPYGKDYPGGFATGRFSDGRVPSDLIAEKLGLAKTLPAYMNPYLKPEDLLKGVTFASGGTGYDPLTAKIMSVISVWDQLINFKEYISKIKRHFGEEKAKDILEHSFFLVVSSSNDLAHTYLAQTHRYDRTSYANFLADSAVHFVRELHKLGARKIGVFSAVPVGCVPLQRTVFGGFFTRGCNQPLNNMAKQFNARLSPALDSLDKELDGVILYINVYDTLFDMIQHPKKYGFEVADRGCCGKGLLAISYLCNSLNPFTCSNSSAYIFWDSYHPSERAYQVIVDNLLDKYLSKVY</sequence>
<evidence type="ECO:0000250" key="1"/>
<evidence type="ECO:0000255" key="2"/>
<evidence type="ECO:0000305" key="3"/>
<dbReference type="EC" id="3.1.1.-"/>
<dbReference type="EMBL" id="AB078516">
    <property type="status" value="NOT_ANNOTATED_CDS"/>
    <property type="molecule type" value="Genomic_DNA"/>
</dbReference>
<dbReference type="EMBL" id="CP002684">
    <property type="protein sequence ID" value="AEE33560.1"/>
    <property type="molecule type" value="Genomic_DNA"/>
</dbReference>
<dbReference type="EMBL" id="BT015533">
    <property type="status" value="NOT_ANNOTATED_CDS"/>
    <property type="molecule type" value="mRNA"/>
</dbReference>
<dbReference type="RefSeq" id="NP_564738.3">
    <property type="nucleotide sequence ID" value="NM_104633.3"/>
</dbReference>
<dbReference type="RefSeq" id="NP_564741.3">
    <property type="nucleotide sequence ID" value="NM_104641.4"/>
</dbReference>
<dbReference type="RefSeq" id="NP_683444.2">
    <property type="nucleotide sequence ID" value="NM_148603.3"/>
</dbReference>
<dbReference type="SMR" id="Q3ECM4"/>
<dbReference type="FunCoup" id="Q3ECM4">
    <property type="interactions" value="96"/>
</dbReference>
<dbReference type="STRING" id="3702.Q3ECM4"/>
<dbReference type="GlyGen" id="Q3ECM4">
    <property type="glycosylation" value="2 sites"/>
</dbReference>
<dbReference type="PaxDb" id="3702-AT1G58725.1"/>
<dbReference type="DNASU" id="842238"/>
<dbReference type="EnsemblPlants" id="AT1G58725.1">
    <property type="protein sequence ID" value="AT1G58725.1"/>
    <property type="gene ID" value="AT1G58725"/>
</dbReference>
<dbReference type="EnsemblPlants" id="AT1G59030.1">
    <property type="protein sequence ID" value="AT1G59030.1"/>
    <property type="gene ID" value="AT1G59030"/>
</dbReference>
<dbReference type="EnsemblPlants" id="AT1G59406.1">
    <property type="protein sequence ID" value="AT1G59406.1"/>
    <property type="gene ID" value="AT1G59406"/>
</dbReference>
<dbReference type="GeneID" id="842223"/>
<dbReference type="Gramene" id="AT1G58725.1">
    <property type="protein sequence ID" value="AT1G58725.1"/>
    <property type="gene ID" value="AT1G58725"/>
</dbReference>
<dbReference type="Gramene" id="AT1G59030.1">
    <property type="protein sequence ID" value="AT1G59030.1"/>
    <property type="gene ID" value="AT1G59030"/>
</dbReference>
<dbReference type="Gramene" id="AT1G59406.1">
    <property type="protein sequence ID" value="AT1G59406.1"/>
    <property type="gene ID" value="AT1G59406"/>
</dbReference>
<dbReference type="KEGG" id="ath:AT1G58725"/>
<dbReference type="KEGG" id="ath:AT1G59030"/>
<dbReference type="KEGG" id="ath:AT1G59406"/>
<dbReference type="Araport" id="AT1G58725"/>
<dbReference type="TAIR" id="AT1G58725"/>
<dbReference type="eggNOG" id="ENOG502SJTB">
    <property type="taxonomic scope" value="Eukaryota"/>
</dbReference>
<dbReference type="HOGENOM" id="CLU_015101_0_1_1"/>
<dbReference type="InParanoid" id="Q3ECM4"/>
<dbReference type="OMA" id="RSCEDQA"/>
<dbReference type="PhylomeDB" id="Q3ECM4"/>
<dbReference type="PRO" id="PR:Q3ECM4"/>
<dbReference type="Proteomes" id="UP000006548">
    <property type="component" value="Chromosome 1"/>
</dbReference>
<dbReference type="ExpressionAtlas" id="Q3ECM4">
    <property type="expression patterns" value="baseline"/>
</dbReference>
<dbReference type="GO" id="GO:0005576">
    <property type="term" value="C:extracellular region"/>
    <property type="evidence" value="ECO:0007669"/>
    <property type="project" value="UniProtKB-SubCell"/>
</dbReference>
<dbReference type="GO" id="GO:0016298">
    <property type="term" value="F:lipase activity"/>
    <property type="evidence" value="ECO:0007669"/>
    <property type="project" value="InterPro"/>
</dbReference>
<dbReference type="GO" id="GO:0016042">
    <property type="term" value="P:lipid catabolic process"/>
    <property type="evidence" value="ECO:0007669"/>
    <property type="project" value="UniProtKB-KW"/>
</dbReference>
<dbReference type="CDD" id="cd01837">
    <property type="entry name" value="SGNH_plant_lipase_like"/>
    <property type="match status" value="1"/>
</dbReference>
<dbReference type="FunFam" id="3.40.50.1110:FF:000003">
    <property type="entry name" value="GDSL esterase/lipase APG"/>
    <property type="match status" value="1"/>
</dbReference>
<dbReference type="Gene3D" id="3.40.50.1110">
    <property type="entry name" value="SGNH hydrolase"/>
    <property type="match status" value="1"/>
</dbReference>
<dbReference type="InterPro" id="IPR001087">
    <property type="entry name" value="GDSL"/>
</dbReference>
<dbReference type="InterPro" id="IPR050592">
    <property type="entry name" value="GDSL_lipolytic_enzyme"/>
</dbReference>
<dbReference type="InterPro" id="IPR008265">
    <property type="entry name" value="Lipase_GDSL_AS"/>
</dbReference>
<dbReference type="InterPro" id="IPR036514">
    <property type="entry name" value="SGNH_hydro_sf"/>
</dbReference>
<dbReference type="InterPro" id="IPR035669">
    <property type="entry name" value="SGNH_plant_lipase-like"/>
</dbReference>
<dbReference type="PANTHER" id="PTHR45642:SF65">
    <property type="entry name" value="BNAA02G25900D PROTEIN"/>
    <property type="match status" value="1"/>
</dbReference>
<dbReference type="PANTHER" id="PTHR45642">
    <property type="entry name" value="GDSL ESTERASE/LIPASE EXL3"/>
    <property type="match status" value="1"/>
</dbReference>
<dbReference type="Pfam" id="PF00657">
    <property type="entry name" value="Lipase_GDSL"/>
    <property type="match status" value="1"/>
</dbReference>
<dbReference type="SUPFAM" id="SSF52266">
    <property type="entry name" value="SGNH hydrolase"/>
    <property type="match status" value="1"/>
</dbReference>
<dbReference type="PROSITE" id="PS01098">
    <property type="entry name" value="LIPASE_GDSL_SER"/>
    <property type="match status" value="1"/>
</dbReference>
<protein>
    <recommendedName>
        <fullName>GDSL esterase/lipase At1g58725</fullName>
        <ecNumber>3.1.1.-</ecNumber>
    </recommendedName>
    <alternativeName>
        <fullName>Extracellular lipase At1g58725</fullName>
    </alternativeName>
</protein>
<organism>
    <name type="scientific">Arabidopsis thaliana</name>
    <name type="common">Mouse-ear cress</name>
    <dbReference type="NCBI Taxonomy" id="3702"/>
    <lineage>
        <taxon>Eukaryota</taxon>
        <taxon>Viridiplantae</taxon>
        <taxon>Streptophyta</taxon>
        <taxon>Embryophyta</taxon>
        <taxon>Tracheophyta</taxon>
        <taxon>Spermatophyta</taxon>
        <taxon>Magnoliopsida</taxon>
        <taxon>eudicotyledons</taxon>
        <taxon>Gunneridae</taxon>
        <taxon>Pentapetalae</taxon>
        <taxon>rosids</taxon>
        <taxon>malvids</taxon>
        <taxon>Brassicales</taxon>
        <taxon>Brassicaceae</taxon>
        <taxon>Camelineae</taxon>
        <taxon>Arabidopsis</taxon>
    </lineage>
</organism>
<gene>
    <name type="ordered locus">At1g58725</name>
    <name type="ORF">R18I</name>
</gene>
<proteinExistence type="evidence at transcript level"/>